<comment type="function">
    <text evidence="1">Has bacteriolytic activity.</text>
</comment>
<comment type="catalytic activity">
    <reaction evidence="1">
        <text>Hydrolyzes the link between N-acetylmuramoyl residues and L-amino acid residues in certain cell-wall glycopeptides.</text>
        <dbReference type="EC" id="3.5.1.28"/>
    </reaction>
</comment>
<comment type="activity regulation">
    <text evidence="1">Inhibited by phenylmethanesulfonyl fluoride (PMSF) and EDTA.</text>
</comment>
<comment type="biophysicochemical properties">
    <phDependence>
        <text evidence="1">Optimum pH is 8.0.</text>
    </phDependence>
    <temperatureDependence>
        <text evidence="1">Optimum temperature is 65 degrees Celsius.</text>
    </temperatureDependence>
</comment>
<comment type="subunit">
    <text evidence="1">Monomer.</text>
</comment>
<comment type="subcellular location">
    <subcellularLocation>
        <location evidence="1">Secreted</location>
    </subcellularLocation>
</comment>
<proteinExistence type="evidence at protein level"/>
<sequence>XNVVFLNXPXPQW</sequence>
<accession>P85143</accession>
<keyword id="KW-0044">Antibiotic</keyword>
<keyword id="KW-0929">Antimicrobial</keyword>
<keyword id="KW-0903">Direct protein sequencing</keyword>
<keyword id="KW-0378">Hydrolase</keyword>
<keyword id="KW-0964">Secreted</keyword>
<name>NAAA_LYSSP</name>
<feature type="chain" id="PRO_0000287396" description="N-acetylmuramoyl-L-alanine amidase L2">
    <location>
        <begin position="1"/>
        <end position="13" status="greater than"/>
    </location>
</feature>
<feature type="non-terminal residue" evidence="2">
    <location>
        <position position="13"/>
    </location>
</feature>
<dbReference type="EC" id="3.5.1.28"/>
<dbReference type="GO" id="GO:0005576">
    <property type="term" value="C:extracellular region"/>
    <property type="evidence" value="ECO:0007669"/>
    <property type="project" value="UniProtKB-SubCell"/>
</dbReference>
<dbReference type="GO" id="GO:0008745">
    <property type="term" value="F:N-acetylmuramoyl-L-alanine amidase activity"/>
    <property type="evidence" value="ECO:0007669"/>
    <property type="project" value="UniProtKB-EC"/>
</dbReference>
<dbReference type="GO" id="GO:0042742">
    <property type="term" value="P:defense response to bacterium"/>
    <property type="evidence" value="ECO:0007669"/>
    <property type="project" value="UniProtKB-KW"/>
</dbReference>
<organism>
    <name type="scientific">Lysobacter sp</name>
    <dbReference type="NCBI Taxonomy" id="72226"/>
    <lineage>
        <taxon>Bacteria</taxon>
        <taxon>Pseudomonadati</taxon>
        <taxon>Pseudomonadota</taxon>
        <taxon>Gammaproteobacteria</taxon>
        <taxon>Lysobacterales</taxon>
        <taxon>Lysobacteraceae</taxon>
        <taxon>Lysobacter</taxon>
    </lineage>
</organism>
<reference evidence="3" key="1">
    <citation type="submission" date="2007-04" db="UniProtKB">
        <title>Identification of extracellular bacteriolytic enzymes from Lysobacter sp. XL1.</title>
        <authorList>
            <person name="Muranova T.A."/>
            <person name="Stepnaya O.A."/>
            <person name="Tsfasman I.M."/>
            <person name="Kulaev I.S."/>
        </authorList>
    </citation>
    <scope>PROTEIN SEQUENCE</scope>
    <scope>FUNCTION</scope>
    <scope>CATALYTIC ACTIVITY</scope>
    <scope>ACTIVITY REGULATION</scope>
    <scope>BIOPHYSICOCHEMICAL PROPERTIES</scope>
    <scope>SUBUNIT</scope>
    <scope>SUBCELLULAR LOCATION</scope>
    <source>
        <strain evidence="1">XL1</strain>
    </source>
</reference>
<protein>
    <recommendedName>
        <fullName>N-acetylmuramoyl-L-alanine amidase L2</fullName>
        <ecNumber>3.5.1.28</ecNumber>
    </recommendedName>
</protein>
<evidence type="ECO:0000269" key="1">
    <source ref="1"/>
</evidence>
<evidence type="ECO:0000303" key="2">
    <source ref="1"/>
</evidence>
<evidence type="ECO:0000305" key="3"/>